<comment type="function">
    <text evidence="1">Catalyzes oxygen-dependent 5-hydroxyuridine (ho5U) modification at position 34 in tRNAs.</text>
</comment>
<comment type="catalytic activity">
    <reaction evidence="1">
        <text>uridine(34) in tRNA + AH2 + O2 = 5-hydroxyuridine(34) in tRNA + A + H2O</text>
        <dbReference type="Rhea" id="RHEA:64224"/>
        <dbReference type="Rhea" id="RHEA-COMP:11727"/>
        <dbReference type="Rhea" id="RHEA-COMP:13381"/>
        <dbReference type="ChEBI" id="CHEBI:13193"/>
        <dbReference type="ChEBI" id="CHEBI:15377"/>
        <dbReference type="ChEBI" id="CHEBI:15379"/>
        <dbReference type="ChEBI" id="CHEBI:17499"/>
        <dbReference type="ChEBI" id="CHEBI:65315"/>
        <dbReference type="ChEBI" id="CHEBI:136877"/>
    </reaction>
</comment>
<comment type="similarity">
    <text evidence="1">Belongs to the TrhO family.</text>
</comment>
<organism>
    <name type="scientific">Streptococcus thermophilus (strain ATCC BAA-491 / LMD-9)</name>
    <dbReference type="NCBI Taxonomy" id="322159"/>
    <lineage>
        <taxon>Bacteria</taxon>
        <taxon>Bacillati</taxon>
        <taxon>Bacillota</taxon>
        <taxon>Bacilli</taxon>
        <taxon>Lactobacillales</taxon>
        <taxon>Streptococcaceae</taxon>
        <taxon>Streptococcus</taxon>
    </lineage>
</organism>
<name>TRHO_STRTD</name>
<protein>
    <recommendedName>
        <fullName evidence="1">tRNA uridine(34) hydroxylase</fullName>
        <ecNumber evidence="1">1.14.-.-</ecNumber>
    </recommendedName>
    <alternativeName>
        <fullName evidence="1">tRNA hydroxylation protein O</fullName>
    </alternativeName>
</protein>
<proteinExistence type="inferred from homology"/>
<dbReference type="EC" id="1.14.-.-" evidence="1"/>
<dbReference type="EMBL" id="CP000419">
    <property type="protein sequence ID" value="ABJ65857.1"/>
    <property type="molecule type" value="Genomic_DNA"/>
</dbReference>
<dbReference type="RefSeq" id="WP_011680879.1">
    <property type="nucleotide sequence ID" value="NC_008532.1"/>
</dbReference>
<dbReference type="SMR" id="Q03LR5"/>
<dbReference type="KEGG" id="ste:STER_0588"/>
<dbReference type="HOGENOM" id="CLU_038878_1_0_9"/>
<dbReference type="GO" id="GO:0016705">
    <property type="term" value="F:oxidoreductase activity, acting on paired donors, with incorporation or reduction of molecular oxygen"/>
    <property type="evidence" value="ECO:0007669"/>
    <property type="project" value="UniProtKB-UniRule"/>
</dbReference>
<dbReference type="GO" id="GO:0006400">
    <property type="term" value="P:tRNA modification"/>
    <property type="evidence" value="ECO:0007669"/>
    <property type="project" value="UniProtKB-UniRule"/>
</dbReference>
<dbReference type="CDD" id="cd01518">
    <property type="entry name" value="RHOD_YceA"/>
    <property type="match status" value="1"/>
</dbReference>
<dbReference type="Gene3D" id="3.30.70.100">
    <property type="match status" value="1"/>
</dbReference>
<dbReference type="Gene3D" id="3.40.250.10">
    <property type="entry name" value="Rhodanese-like domain"/>
    <property type="match status" value="1"/>
</dbReference>
<dbReference type="HAMAP" id="MF_00469">
    <property type="entry name" value="TrhO"/>
    <property type="match status" value="1"/>
</dbReference>
<dbReference type="InterPro" id="IPR001763">
    <property type="entry name" value="Rhodanese-like_dom"/>
</dbReference>
<dbReference type="InterPro" id="IPR036873">
    <property type="entry name" value="Rhodanese-like_dom_sf"/>
</dbReference>
<dbReference type="InterPro" id="IPR022111">
    <property type="entry name" value="Rhodanese_C"/>
</dbReference>
<dbReference type="InterPro" id="IPR020936">
    <property type="entry name" value="TrhO"/>
</dbReference>
<dbReference type="InterPro" id="IPR040503">
    <property type="entry name" value="TRHO_N"/>
</dbReference>
<dbReference type="NCBIfam" id="NF001135">
    <property type="entry name" value="PRK00142.1-3"/>
    <property type="match status" value="1"/>
</dbReference>
<dbReference type="NCBIfam" id="NF001137">
    <property type="entry name" value="PRK00142.1-5"/>
    <property type="match status" value="1"/>
</dbReference>
<dbReference type="PANTHER" id="PTHR43268:SF3">
    <property type="entry name" value="RHODANESE-LIKE DOMAIN-CONTAINING PROTEIN 7-RELATED"/>
    <property type="match status" value="1"/>
</dbReference>
<dbReference type="PANTHER" id="PTHR43268">
    <property type="entry name" value="THIOSULFATE SULFURTRANSFERASE/RHODANESE-LIKE DOMAIN-CONTAINING PROTEIN 2"/>
    <property type="match status" value="1"/>
</dbReference>
<dbReference type="Pfam" id="PF00581">
    <property type="entry name" value="Rhodanese"/>
    <property type="match status" value="1"/>
</dbReference>
<dbReference type="Pfam" id="PF12368">
    <property type="entry name" value="Rhodanese_C"/>
    <property type="match status" value="1"/>
</dbReference>
<dbReference type="Pfam" id="PF17773">
    <property type="entry name" value="UPF0176_N"/>
    <property type="match status" value="1"/>
</dbReference>
<dbReference type="SMART" id="SM00450">
    <property type="entry name" value="RHOD"/>
    <property type="match status" value="1"/>
</dbReference>
<dbReference type="SUPFAM" id="SSF52821">
    <property type="entry name" value="Rhodanese/Cell cycle control phosphatase"/>
    <property type="match status" value="1"/>
</dbReference>
<dbReference type="PROSITE" id="PS50206">
    <property type="entry name" value="RHODANESE_3"/>
    <property type="match status" value="1"/>
</dbReference>
<sequence>MAKPIRVLLYYKYVPIENAEQFAADHLAFCKSIGLKGRILVADEGINGTVSGDYETTQKYMDYVHSLPGMEDLWFKIDEEEEQAFKKMFVRYKKEIVHLGLEDNNFDSDINPLETTGAYLSPKEFKDALLDEDTVVLDTRNDYEYDLGHFRGAIRPDIRNFRELPQWVRDHKEEFMDKRVVVYCTGGVRCEKFSGWLVREGYKDVGQLHGGIVTYGKDPEVQGELWDGKLYVFDERIAVDVNHVDPIVVGKDWFDGTPCERYVNCGNPFCNRRILTSEENEDKYLRGCSHECRVHPRNRYVSENDLSQEEVVSRLAAIGESLDVTPA</sequence>
<gene>
    <name evidence="1" type="primary">trhO</name>
    <name type="ordered locus">STER_0588</name>
</gene>
<reference key="1">
    <citation type="journal article" date="2006" name="Proc. Natl. Acad. Sci. U.S.A.">
        <title>Comparative genomics of the lactic acid bacteria.</title>
        <authorList>
            <person name="Makarova K.S."/>
            <person name="Slesarev A."/>
            <person name="Wolf Y.I."/>
            <person name="Sorokin A."/>
            <person name="Mirkin B."/>
            <person name="Koonin E.V."/>
            <person name="Pavlov A."/>
            <person name="Pavlova N."/>
            <person name="Karamychev V."/>
            <person name="Polouchine N."/>
            <person name="Shakhova V."/>
            <person name="Grigoriev I."/>
            <person name="Lou Y."/>
            <person name="Rohksar D."/>
            <person name="Lucas S."/>
            <person name="Huang K."/>
            <person name="Goodstein D.M."/>
            <person name="Hawkins T."/>
            <person name="Plengvidhya V."/>
            <person name="Welker D."/>
            <person name="Hughes J."/>
            <person name="Goh Y."/>
            <person name="Benson A."/>
            <person name="Baldwin K."/>
            <person name="Lee J.-H."/>
            <person name="Diaz-Muniz I."/>
            <person name="Dosti B."/>
            <person name="Smeianov V."/>
            <person name="Wechter W."/>
            <person name="Barabote R."/>
            <person name="Lorca G."/>
            <person name="Altermann E."/>
            <person name="Barrangou R."/>
            <person name="Ganesan B."/>
            <person name="Xie Y."/>
            <person name="Rawsthorne H."/>
            <person name="Tamir D."/>
            <person name="Parker C."/>
            <person name="Breidt F."/>
            <person name="Broadbent J.R."/>
            <person name="Hutkins R."/>
            <person name="O'Sullivan D."/>
            <person name="Steele J."/>
            <person name="Unlu G."/>
            <person name="Saier M.H. Jr."/>
            <person name="Klaenhammer T."/>
            <person name="Richardson P."/>
            <person name="Kozyavkin S."/>
            <person name="Weimer B.C."/>
            <person name="Mills D.A."/>
        </authorList>
    </citation>
    <scope>NUCLEOTIDE SEQUENCE [LARGE SCALE GENOMIC DNA]</scope>
    <source>
        <strain>ATCC BAA-491 / LMD-9</strain>
    </source>
</reference>
<accession>Q03LR5</accession>
<evidence type="ECO:0000255" key="1">
    <source>
        <dbReference type="HAMAP-Rule" id="MF_00469"/>
    </source>
</evidence>
<feature type="chain" id="PRO_1000013792" description="tRNA uridine(34) hydroxylase">
    <location>
        <begin position="1"/>
        <end position="327"/>
    </location>
</feature>
<feature type="domain" description="Rhodanese" evidence="1">
    <location>
        <begin position="130"/>
        <end position="224"/>
    </location>
</feature>
<feature type="active site" description="Cysteine persulfide intermediate" evidence="1">
    <location>
        <position position="184"/>
    </location>
</feature>
<keyword id="KW-0560">Oxidoreductase</keyword>
<keyword id="KW-0819">tRNA processing</keyword>